<comment type="function">
    <text evidence="1">Has immunoglobulin-binding and hemagglutination properties, and can bind to mannose. Essential for virulence. May be involved in LPS biosynthesis or polysaccharide transport (By similarity).</text>
</comment>
<comment type="subcellular location">
    <subcellularLocation>
        <location evidence="3">Cell membrane</location>
        <topology evidence="3">Single-pass membrane protein</topology>
    </subcellularLocation>
</comment>
<comment type="similarity">
    <text evidence="3">Belongs to the BA14k family.</text>
</comment>
<sequence>MNSFRKTCAGALALIFGATSIVPTVAAPMNMDRPAINQNVIQARAHYRPQNYNRGHRPGYWHGHRGYRHYRHGYRRHNDGWWYPLAAFGAGAIIGGAISQPRPVYRAPAGSPHVQWCYSRYKSYRASDNTFQPYNGPRKQCRSPYSR</sequence>
<gene>
    <name type="ordered locus">BMEII0552</name>
</gene>
<dbReference type="EMBL" id="AE008918">
    <property type="protein sequence ID" value="AAL53794.1"/>
    <property type="molecule type" value="Genomic_DNA"/>
</dbReference>
<dbReference type="RefSeq" id="WP_002965908.1">
    <property type="nucleotide sequence ID" value="NZ_GG703779.1"/>
</dbReference>
<dbReference type="KEGG" id="bme:BMEII0552"/>
<dbReference type="KEGG" id="bmel:DK63_2694"/>
<dbReference type="PATRIC" id="fig|224914.52.peg.2822"/>
<dbReference type="eggNOG" id="ENOG5033457">
    <property type="taxonomic scope" value="Bacteria"/>
</dbReference>
<dbReference type="PhylomeDB" id="Q7CNS4"/>
<dbReference type="Proteomes" id="UP000000419">
    <property type="component" value="Chromosome II"/>
</dbReference>
<dbReference type="GO" id="GO:0005886">
    <property type="term" value="C:plasma membrane"/>
    <property type="evidence" value="ECO:0007669"/>
    <property type="project" value="UniProtKB-SubCell"/>
</dbReference>
<dbReference type="GO" id="GO:0030246">
    <property type="term" value="F:carbohydrate binding"/>
    <property type="evidence" value="ECO:0007669"/>
    <property type="project" value="UniProtKB-KW"/>
</dbReference>
<dbReference type="InterPro" id="IPR012413">
    <property type="entry name" value="BA14K"/>
</dbReference>
<dbReference type="Pfam" id="PF07886">
    <property type="entry name" value="BA14K"/>
    <property type="match status" value="1"/>
</dbReference>
<proteinExistence type="inferred from homology"/>
<accession>Q7CNS4</accession>
<name>14KL_BRUME</name>
<feature type="signal peptide" evidence="2">
    <location>
        <begin position="1"/>
        <end position="26"/>
    </location>
</feature>
<feature type="chain" id="PRO_0000361299" description="Lectin-like protein BA14k">
    <location>
        <begin position="27"/>
        <end position="147"/>
    </location>
</feature>
<feature type="transmembrane region" description="Helical" evidence="2">
    <location>
        <begin position="80"/>
        <end position="100"/>
    </location>
</feature>
<keyword id="KW-1003">Cell membrane</keyword>
<keyword id="KW-0430">Lectin</keyword>
<keyword id="KW-0472">Membrane</keyword>
<keyword id="KW-0732">Signal</keyword>
<keyword id="KW-0812">Transmembrane</keyword>
<keyword id="KW-1133">Transmembrane helix</keyword>
<keyword id="KW-0843">Virulence</keyword>
<evidence type="ECO:0000250" key="1"/>
<evidence type="ECO:0000255" key="2"/>
<evidence type="ECO:0000305" key="3"/>
<reference key="1">
    <citation type="journal article" date="2002" name="Proc. Natl. Acad. Sci. U.S.A.">
        <title>The genome sequence of the facultative intracellular pathogen Brucella melitensis.</title>
        <authorList>
            <person name="DelVecchio V.G."/>
            <person name="Kapatral V."/>
            <person name="Redkar R.J."/>
            <person name="Patra G."/>
            <person name="Mujer C."/>
            <person name="Los T."/>
            <person name="Ivanova N."/>
            <person name="Anderson I."/>
            <person name="Bhattacharyya A."/>
            <person name="Lykidis A."/>
            <person name="Reznik G."/>
            <person name="Jablonski L."/>
            <person name="Larsen N."/>
            <person name="D'Souza M."/>
            <person name="Bernal A."/>
            <person name="Mazur M."/>
            <person name="Goltsman E."/>
            <person name="Selkov E."/>
            <person name="Elzer P.H."/>
            <person name="Hagius S."/>
            <person name="O'Callaghan D."/>
            <person name="Letesson J.-J."/>
            <person name="Haselkorn R."/>
            <person name="Kyrpides N.C."/>
            <person name="Overbeek R."/>
        </authorList>
    </citation>
    <scope>NUCLEOTIDE SEQUENCE [LARGE SCALE GENOMIC DNA]</scope>
    <source>
        <strain>ATCC 23456 / CCUG 17765 / NCTC 10094 / 16M</strain>
    </source>
</reference>
<organism>
    <name type="scientific">Brucella melitensis biotype 1 (strain ATCC 23456 / CCUG 17765 / NCTC 10094 / 16M)</name>
    <dbReference type="NCBI Taxonomy" id="224914"/>
    <lineage>
        <taxon>Bacteria</taxon>
        <taxon>Pseudomonadati</taxon>
        <taxon>Pseudomonadota</taxon>
        <taxon>Alphaproteobacteria</taxon>
        <taxon>Hyphomicrobiales</taxon>
        <taxon>Brucellaceae</taxon>
        <taxon>Brucella/Ochrobactrum group</taxon>
        <taxon>Brucella</taxon>
    </lineage>
</organism>
<protein>
    <recommendedName>
        <fullName>Lectin-like protein BA14k</fullName>
    </recommendedName>
</protein>